<protein>
    <recommendedName>
        <fullName evidence="1">Phosphoribosylformylglycinamidine cyclo-ligase</fullName>
        <ecNumber evidence="1">6.3.3.1</ecNumber>
    </recommendedName>
    <alternativeName>
        <fullName evidence="1">AIR synthase</fullName>
    </alternativeName>
    <alternativeName>
        <fullName evidence="1">AIRS</fullName>
    </alternativeName>
    <alternativeName>
        <fullName evidence="1">Phosphoribosyl-aminoimidazole synthetase</fullName>
    </alternativeName>
</protein>
<accession>Q2Y5R7</accession>
<dbReference type="EC" id="6.3.3.1" evidence="1"/>
<dbReference type="EMBL" id="CP000103">
    <property type="protein sequence ID" value="ABB75904.1"/>
    <property type="status" value="ALT_INIT"/>
    <property type="molecule type" value="Genomic_DNA"/>
</dbReference>
<dbReference type="RefSeq" id="WP_041352649.1">
    <property type="nucleotide sequence ID" value="NC_007614.1"/>
</dbReference>
<dbReference type="SMR" id="Q2Y5R7"/>
<dbReference type="STRING" id="323848.Nmul_A2617"/>
<dbReference type="KEGG" id="nmu:Nmul_A2617"/>
<dbReference type="eggNOG" id="COG0150">
    <property type="taxonomic scope" value="Bacteria"/>
</dbReference>
<dbReference type="HOGENOM" id="CLU_047116_0_0_4"/>
<dbReference type="OrthoDB" id="9777881at2"/>
<dbReference type="UniPathway" id="UPA00074">
    <property type="reaction ID" value="UER00129"/>
</dbReference>
<dbReference type="Proteomes" id="UP000002718">
    <property type="component" value="Chromosome"/>
</dbReference>
<dbReference type="GO" id="GO:0005829">
    <property type="term" value="C:cytosol"/>
    <property type="evidence" value="ECO:0007669"/>
    <property type="project" value="TreeGrafter"/>
</dbReference>
<dbReference type="GO" id="GO:0005524">
    <property type="term" value="F:ATP binding"/>
    <property type="evidence" value="ECO:0007669"/>
    <property type="project" value="UniProtKB-KW"/>
</dbReference>
<dbReference type="GO" id="GO:0004637">
    <property type="term" value="F:phosphoribosylamine-glycine ligase activity"/>
    <property type="evidence" value="ECO:0007669"/>
    <property type="project" value="TreeGrafter"/>
</dbReference>
<dbReference type="GO" id="GO:0004641">
    <property type="term" value="F:phosphoribosylformylglycinamidine cyclo-ligase activity"/>
    <property type="evidence" value="ECO:0007669"/>
    <property type="project" value="UniProtKB-UniRule"/>
</dbReference>
<dbReference type="GO" id="GO:0006189">
    <property type="term" value="P:'de novo' IMP biosynthetic process"/>
    <property type="evidence" value="ECO:0007669"/>
    <property type="project" value="UniProtKB-UniRule"/>
</dbReference>
<dbReference type="GO" id="GO:0046084">
    <property type="term" value="P:adenine biosynthetic process"/>
    <property type="evidence" value="ECO:0007669"/>
    <property type="project" value="TreeGrafter"/>
</dbReference>
<dbReference type="CDD" id="cd02196">
    <property type="entry name" value="PurM"/>
    <property type="match status" value="1"/>
</dbReference>
<dbReference type="FunFam" id="3.30.1330.10:FF:000001">
    <property type="entry name" value="Phosphoribosylformylglycinamidine cyclo-ligase"/>
    <property type="match status" value="1"/>
</dbReference>
<dbReference type="FunFam" id="3.90.650.10:FF:000001">
    <property type="entry name" value="Phosphoribosylformylglycinamidine cyclo-ligase"/>
    <property type="match status" value="1"/>
</dbReference>
<dbReference type="Gene3D" id="3.90.650.10">
    <property type="entry name" value="PurM-like C-terminal domain"/>
    <property type="match status" value="1"/>
</dbReference>
<dbReference type="Gene3D" id="3.30.1330.10">
    <property type="entry name" value="PurM-like, N-terminal domain"/>
    <property type="match status" value="1"/>
</dbReference>
<dbReference type="HAMAP" id="MF_00741">
    <property type="entry name" value="AIRS"/>
    <property type="match status" value="1"/>
</dbReference>
<dbReference type="InterPro" id="IPR010918">
    <property type="entry name" value="PurM-like_C_dom"/>
</dbReference>
<dbReference type="InterPro" id="IPR036676">
    <property type="entry name" value="PurM-like_C_sf"/>
</dbReference>
<dbReference type="InterPro" id="IPR016188">
    <property type="entry name" value="PurM-like_N"/>
</dbReference>
<dbReference type="InterPro" id="IPR036921">
    <property type="entry name" value="PurM-like_N_sf"/>
</dbReference>
<dbReference type="InterPro" id="IPR004733">
    <property type="entry name" value="PurM_cligase"/>
</dbReference>
<dbReference type="NCBIfam" id="TIGR00878">
    <property type="entry name" value="purM"/>
    <property type="match status" value="1"/>
</dbReference>
<dbReference type="PANTHER" id="PTHR10520:SF12">
    <property type="entry name" value="TRIFUNCTIONAL PURINE BIOSYNTHETIC PROTEIN ADENOSINE-3"/>
    <property type="match status" value="1"/>
</dbReference>
<dbReference type="PANTHER" id="PTHR10520">
    <property type="entry name" value="TRIFUNCTIONAL PURINE BIOSYNTHETIC PROTEIN ADENOSINE-3-RELATED"/>
    <property type="match status" value="1"/>
</dbReference>
<dbReference type="Pfam" id="PF00586">
    <property type="entry name" value="AIRS"/>
    <property type="match status" value="1"/>
</dbReference>
<dbReference type="Pfam" id="PF02769">
    <property type="entry name" value="AIRS_C"/>
    <property type="match status" value="1"/>
</dbReference>
<dbReference type="SUPFAM" id="SSF56042">
    <property type="entry name" value="PurM C-terminal domain-like"/>
    <property type="match status" value="1"/>
</dbReference>
<dbReference type="SUPFAM" id="SSF55326">
    <property type="entry name" value="PurM N-terminal domain-like"/>
    <property type="match status" value="1"/>
</dbReference>
<feature type="chain" id="PRO_0000258375" description="Phosphoribosylformylglycinamidine cyclo-ligase">
    <location>
        <begin position="1"/>
        <end position="352"/>
    </location>
</feature>
<evidence type="ECO:0000255" key="1">
    <source>
        <dbReference type="HAMAP-Rule" id="MF_00741"/>
    </source>
</evidence>
<evidence type="ECO:0000305" key="2"/>
<reference key="1">
    <citation type="submission" date="2005-08" db="EMBL/GenBank/DDBJ databases">
        <title>Complete sequence of chromosome 1 of Nitrosospira multiformis ATCC 25196.</title>
        <authorList>
            <person name="Copeland A."/>
            <person name="Lucas S."/>
            <person name="Lapidus A."/>
            <person name="Barry K."/>
            <person name="Detter J.C."/>
            <person name="Glavina T."/>
            <person name="Hammon N."/>
            <person name="Israni S."/>
            <person name="Pitluck S."/>
            <person name="Chain P."/>
            <person name="Malfatti S."/>
            <person name="Shin M."/>
            <person name="Vergez L."/>
            <person name="Schmutz J."/>
            <person name="Larimer F."/>
            <person name="Land M."/>
            <person name="Hauser L."/>
            <person name="Kyrpides N."/>
            <person name="Lykidis A."/>
            <person name="Richardson P."/>
        </authorList>
    </citation>
    <scope>NUCLEOTIDE SEQUENCE [LARGE SCALE GENOMIC DNA]</scope>
    <source>
        <strain>ATCC 25196 / NCIMB 11849 / C 71</strain>
    </source>
</reference>
<proteinExistence type="inferred from homology"/>
<comment type="catalytic activity">
    <reaction evidence="1">
        <text>2-formamido-N(1)-(5-O-phospho-beta-D-ribosyl)acetamidine + ATP = 5-amino-1-(5-phospho-beta-D-ribosyl)imidazole + ADP + phosphate + H(+)</text>
        <dbReference type="Rhea" id="RHEA:23032"/>
        <dbReference type="ChEBI" id="CHEBI:15378"/>
        <dbReference type="ChEBI" id="CHEBI:30616"/>
        <dbReference type="ChEBI" id="CHEBI:43474"/>
        <dbReference type="ChEBI" id="CHEBI:137981"/>
        <dbReference type="ChEBI" id="CHEBI:147287"/>
        <dbReference type="ChEBI" id="CHEBI:456216"/>
        <dbReference type="EC" id="6.3.3.1"/>
    </reaction>
</comment>
<comment type="pathway">
    <text evidence="1">Purine metabolism; IMP biosynthesis via de novo pathway; 5-amino-1-(5-phospho-D-ribosyl)imidazole from N(2)-formyl-N(1)-(5-phospho-D-ribosyl)glycinamide: step 2/2.</text>
</comment>
<comment type="subcellular location">
    <subcellularLocation>
        <location evidence="1">Cytoplasm</location>
    </subcellularLocation>
</comment>
<comment type="similarity">
    <text evidence="1">Belongs to the AIR synthase family.</text>
</comment>
<comment type="sequence caution" evidence="2">
    <conflict type="erroneous initiation">
        <sequence resource="EMBL-CDS" id="ABB75904"/>
    </conflict>
</comment>
<name>PUR5_NITMU</name>
<organism>
    <name type="scientific">Nitrosospira multiformis (strain ATCC 25196 / NCIMB 11849 / C 71)</name>
    <dbReference type="NCBI Taxonomy" id="323848"/>
    <lineage>
        <taxon>Bacteria</taxon>
        <taxon>Pseudomonadati</taxon>
        <taxon>Pseudomonadota</taxon>
        <taxon>Betaproteobacteria</taxon>
        <taxon>Nitrosomonadales</taxon>
        <taxon>Nitrosomonadaceae</taxon>
        <taxon>Nitrosospira</taxon>
    </lineage>
</organism>
<sequence>MTTSKPHEENLSPLSYRAAGVDIDAGERLVENIRPYAKRTLRPEVLAGIGGFGALFEISRKFNNPVLVAGTDGVGTKLKLAFESGRHDTVGIDLVAMSVNDILVQGAEPLFFLDYFACGKLDVDTATLVVKGIAAGCEQAGCALIGGETAEMPGMYPEGEYDLAGFAVGAVEKDRIITGTTIKAGDAVLGLASSGAHSNGYSLIRKIIEKNNVDLSADFHGRALIDVIMAPTRIYVKPLLELMRQVPVKGMAHITGGGLLENIPRILPEGVTAVLKKETWEMPPLFAWLQREGNVADNEMHRVFNCGIGMAVVVAPEYIDAAAQLLQSKGEIAWRIGTIREQRADEPRTILE</sequence>
<gene>
    <name evidence="1" type="primary">purM</name>
    <name type="ordered locus">Nmul_A2617</name>
</gene>
<keyword id="KW-0067">ATP-binding</keyword>
<keyword id="KW-0963">Cytoplasm</keyword>
<keyword id="KW-0436">Ligase</keyword>
<keyword id="KW-0547">Nucleotide-binding</keyword>
<keyword id="KW-0658">Purine biosynthesis</keyword>
<keyword id="KW-1185">Reference proteome</keyword>